<organism>
    <name type="scientific">Bacillus subtilis (strain 168)</name>
    <dbReference type="NCBI Taxonomy" id="224308"/>
    <lineage>
        <taxon>Bacteria</taxon>
        <taxon>Bacillati</taxon>
        <taxon>Bacillota</taxon>
        <taxon>Bacilli</taxon>
        <taxon>Bacillales</taxon>
        <taxon>Bacillaceae</taxon>
        <taxon>Bacillus</taxon>
    </lineage>
</organism>
<protein>
    <recommendedName>
        <fullName>Beta-N-acetylglucosaminidase</fullName>
        <ecNumber>3.2.1.96</ecNumber>
    </recommendedName>
    <alternativeName>
        <fullName>Cell wall-associated polypeptide 90</fullName>
        <shortName>CWBP90</shortName>
    </alternativeName>
</protein>
<reference key="1">
    <citation type="journal article" date="1994" name="Mol. Microbiol.">
        <title>The gene of the N-acetylglucosaminidase, a Bacillus subtilis 168 cell wall hydrolase not involved in vegetative cell autolysis.</title>
        <authorList>
            <person name="Margot P."/>
            <person name="Maueel C."/>
            <person name="Karamata D."/>
        </authorList>
    </citation>
    <scope>NUCLEOTIDE SEQUENCE [GENOMIC DNA]</scope>
    <scope>FUNCTION</scope>
    <source>
        <strain>168</strain>
    </source>
</reference>
<reference key="2">
    <citation type="journal article" date="1995" name="Microbiology">
        <title>Glucosaminidase of Bacillus subtilis: cloning, regulation, primary structure and biochemical characterization.</title>
        <authorList>
            <person name="Rashid M.H."/>
            <person name="Mori M."/>
            <person name="Sekiguchi J."/>
        </authorList>
    </citation>
    <scope>NUCLEOTIDE SEQUENCE [GENOMIC DNA]</scope>
    <scope>FUNCTION</scope>
    <scope>ACTIVITY REGULATION</scope>
    <scope>REGULATION BY SIGD</scope>
    <source>
        <strain>168 / AC327</strain>
    </source>
</reference>
<reference key="3">
    <citation type="journal article" date="1997" name="Nature">
        <title>The complete genome sequence of the Gram-positive bacterium Bacillus subtilis.</title>
        <authorList>
            <person name="Kunst F."/>
            <person name="Ogasawara N."/>
            <person name="Moszer I."/>
            <person name="Albertini A.M."/>
            <person name="Alloni G."/>
            <person name="Azevedo V."/>
            <person name="Bertero M.G."/>
            <person name="Bessieres P."/>
            <person name="Bolotin A."/>
            <person name="Borchert S."/>
            <person name="Borriss R."/>
            <person name="Boursier L."/>
            <person name="Brans A."/>
            <person name="Braun M."/>
            <person name="Brignell S.C."/>
            <person name="Bron S."/>
            <person name="Brouillet S."/>
            <person name="Bruschi C.V."/>
            <person name="Caldwell B."/>
            <person name="Capuano V."/>
            <person name="Carter N.M."/>
            <person name="Choi S.-K."/>
            <person name="Codani J.-J."/>
            <person name="Connerton I.F."/>
            <person name="Cummings N.J."/>
            <person name="Daniel R.A."/>
            <person name="Denizot F."/>
            <person name="Devine K.M."/>
            <person name="Duesterhoeft A."/>
            <person name="Ehrlich S.D."/>
            <person name="Emmerson P.T."/>
            <person name="Entian K.-D."/>
            <person name="Errington J."/>
            <person name="Fabret C."/>
            <person name="Ferrari E."/>
            <person name="Foulger D."/>
            <person name="Fritz C."/>
            <person name="Fujita M."/>
            <person name="Fujita Y."/>
            <person name="Fuma S."/>
            <person name="Galizzi A."/>
            <person name="Galleron N."/>
            <person name="Ghim S.-Y."/>
            <person name="Glaser P."/>
            <person name="Goffeau A."/>
            <person name="Golightly E.J."/>
            <person name="Grandi G."/>
            <person name="Guiseppi G."/>
            <person name="Guy B.J."/>
            <person name="Haga K."/>
            <person name="Haiech J."/>
            <person name="Harwood C.R."/>
            <person name="Henaut A."/>
            <person name="Hilbert H."/>
            <person name="Holsappel S."/>
            <person name="Hosono S."/>
            <person name="Hullo M.-F."/>
            <person name="Itaya M."/>
            <person name="Jones L.-M."/>
            <person name="Joris B."/>
            <person name="Karamata D."/>
            <person name="Kasahara Y."/>
            <person name="Klaerr-Blanchard M."/>
            <person name="Klein C."/>
            <person name="Kobayashi Y."/>
            <person name="Koetter P."/>
            <person name="Koningstein G."/>
            <person name="Krogh S."/>
            <person name="Kumano M."/>
            <person name="Kurita K."/>
            <person name="Lapidus A."/>
            <person name="Lardinois S."/>
            <person name="Lauber J."/>
            <person name="Lazarevic V."/>
            <person name="Lee S.-M."/>
            <person name="Levine A."/>
            <person name="Liu H."/>
            <person name="Masuda S."/>
            <person name="Mauel C."/>
            <person name="Medigue C."/>
            <person name="Medina N."/>
            <person name="Mellado R.P."/>
            <person name="Mizuno M."/>
            <person name="Moestl D."/>
            <person name="Nakai S."/>
            <person name="Noback M."/>
            <person name="Noone D."/>
            <person name="O'Reilly M."/>
            <person name="Ogawa K."/>
            <person name="Ogiwara A."/>
            <person name="Oudega B."/>
            <person name="Park S.-H."/>
            <person name="Parro V."/>
            <person name="Pohl T.M."/>
            <person name="Portetelle D."/>
            <person name="Porwollik S."/>
            <person name="Prescott A.M."/>
            <person name="Presecan E."/>
            <person name="Pujic P."/>
            <person name="Purnelle B."/>
            <person name="Rapoport G."/>
            <person name="Rey M."/>
            <person name="Reynolds S."/>
            <person name="Rieger M."/>
            <person name="Rivolta C."/>
            <person name="Rocha E."/>
            <person name="Roche B."/>
            <person name="Rose M."/>
            <person name="Sadaie Y."/>
            <person name="Sato T."/>
            <person name="Scanlan E."/>
            <person name="Schleich S."/>
            <person name="Schroeter R."/>
            <person name="Scoffone F."/>
            <person name="Sekiguchi J."/>
            <person name="Sekowska A."/>
            <person name="Seror S.J."/>
            <person name="Serror P."/>
            <person name="Shin B.-S."/>
            <person name="Soldo B."/>
            <person name="Sorokin A."/>
            <person name="Tacconi E."/>
            <person name="Takagi T."/>
            <person name="Takahashi H."/>
            <person name="Takemaru K."/>
            <person name="Takeuchi M."/>
            <person name="Tamakoshi A."/>
            <person name="Tanaka T."/>
            <person name="Terpstra P."/>
            <person name="Tognoni A."/>
            <person name="Tosato V."/>
            <person name="Uchiyama S."/>
            <person name="Vandenbol M."/>
            <person name="Vannier F."/>
            <person name="Vassarotti A."/>
            <person name="Viari A."/>
            <person name="Wambutt R."/>
            <person name="Wedler E."/>
            <person name="Wedler H."/>
            <person name="Weitzenegger T."/>
            <person name="Winters P."/>
            <person name="Wipat A."/>
            <person name="Yamamoto H."/>
            <person name="Yamane K."/>
            <person name="Yasumoto K."/>
            <person name="Yata K."/>
            <person name="Yoshida K."/>
            <person name="Yoshikawa H.-F."/>
            <person name="Zumstein E."/>
            <person name="Yoshikawa H."/>
            <person name="Danchin A."/>
        </authorList>
    </citation>
    <scope>NUCLEOTIDE SEQUENCE [LARGE SCALE GENOMIC DNA]</scope>
    <source>
        <strain>168</strain>
    </source>
</reference>
<reference key="4">
    <citation type="journal article" date="1993" name="FEMS Microbiol. Lett.">
        <title>Bacillus subtilis mutant deficient in the major autolytic amidase and glucosaminidase is impaired in motility.</title>
        <authorList>
            <person name="Rashid M.H."/>
            <person name="Kuroda A."/>
            <person name="Sekiguchi J."/>
        </authorList>
    </citation>
    <scope>PROTEIN SEQUENCE OF N-TERMINUS</scope>
    <scope>DISRUPTION PHENOTYPE</scope>
    <source>
        <strain>168 / AC327</strain>
    </source>
</reference>
<reference key="5">
    <citation type="journal article" date="2002" name="Proteomics">
        <title>Stabilization of cell wall proteins in Bacillus subtilis: a proteomic approach.</title>
        <authorList>
            <person name="Antelmann H."/>
            <person name="Yamamoto H."/>
            <person name="Sekiguchi J."/>
            <person name="Hecker M."/>
        </authorList>
    </citation>
    <scope>SUBCELLULAR LOCATION</scope>
    <scope>INDUCTION</scope>
    <scope>IDENTIFICATION BY MASS SPECTROMETRY</scope>
    <source>
        <strain>168</strain>
    </source>
</reference>
<sequence length="880" mass="95554">MKKRLIAPMLLSAASLAFFAMSGSAQAAAYTDYSLYKVEPSNTFSTESQASQAVAKLEKDTGWDASYQASGTTTTYQISASGIHSESEAKAILSGLAKQTSITGTSSPVGSKQPYVTISSGAISGEKQANTILAKLKQETGVAGAVKAYGAAQPYMNVMTSDIADETKVKALIQSLAKQTGIKSSYQPITHTVSVTTIQSGTIVGDSRAAQIKNAFQKESGLQASLKETVKGQAYYTFTTAAISGEANAKTLLQQLKQSTGITGSYKSINQKTTVESYNVQSAYFKGLSTVKDAISQIKKNTGVSGSYQQVGKSTSYTVNMKGITKQQLQKIDTFFKKKKWHYTSSSVKKTTTSAAYQITTAKILGEQQANKAAAFFAQKKVKAAKTAAGSTAENQYQLISEETSDQAKVTKGLNILKKNQLSASAKSVKKQIADTFKITTESLLDQTKVNQALTFFKSNHISVASQKTGQTAASSYQITTEAIISQEEIDRVLTFFKQNHIAVTTSKTGQTAYTQYKIVTTQLSSKTALNNGLTYLKSKSVTPSYTTKSNTLYKISVNEQFTGNDTAAAASTKLKQLYGWTSSIVKIKNGPQIMKTNYNLSLRDMVQKQMTVSPQTDGAAYVSLTYINTATSTVTADVLNIRSTPEVSPTNVIGQFKKGDKVKVIGQINGWAKINLGWRNASSDEVVQYVDPNNFSRDSKYYFQFLKLSQTAGLSVTEVNQKVLAGKGILTGRAKAFIDAANQYSINELYLISHALLETGNGTSALANGLTYNGKTVYNMYGIGAYDSNPNYYGAKYAYEQGWFTPEAAIIGGAKFIGSSYIHNTAYNQDTLYKMRWSATATHQYATDIGWAYKQVNRMYSLYSLLDGYTLYFDVPEYR</sequence>
<dbReference type="EC" id="3.2.1.96"/>
<dbReference type="EMBL" id="U02562">
    <property type="protein sequence ID" value="AAA67857.1"/>
    <property type="molecule type" value="Genomic_DNA"/>
</dbReference>
<dbReference type="EMBL" id="D45048">
    <property type="protein sequence ID" value="BAA08089.1"/>
    <property type="molecule type" value="Genomic_DNA"/>
</dbReference>
<dbReference type="EMBL" id="AL009126">
    <property type="protein sequence ID" value="CAB15595.1"/>
    <property type="molecule type" value="Genomic_DNA"/>
</dbReference>
<dbReference type="PIR" id="S60137">
    <property type="entry name" value="S60137"/>
</dbReference>
<dbReference type="RefSeq" id="NP_391459.1">
    <property type="nucleotide sequence ID" value="NC_000964.3"/>
</dbReference>
<dbReference type="RefSeq" id="WP_003243594.1">
    <property type="nucleotide sequence ID" value="NZ_OZ025638.1"/>
</dbReference>
<dbReference type="SMR" id="P39848"/>
<dbReference type="FunCoup" id="P39848">
    <property type="interactions" value="71"/>
</dbReference>
<dbReference type="STRING" id="224308.BSU35780"/>
<dbReference type="CAZy" id="GH73">
    <property type="family name" value="Glycoside Hydrolase Family 73"/>
</dbReference>
<dbReference type="jPOST" id="P39848"/>
<dbReference type="PaxDb" id="224308-BSU35780"/>
<dbReference type="EnsemblBacteria" id="CAB15595">
    <property type="protein sequence ID" value="CAB15595"/>
    <property type="gene ID" value="BSU_35780"/>
</dbReference>
<dbReference type="GeneID" id="936822"/>
<dbReference type="KEGG" id="bsu:BSU35780"/>
<dbReference type="PATRIC" id="fig|224308.179.peg.3873"/>
<dbReference type="eggNOG" id="COG4193">
    <property type="taxonomic scope" value="Bacteria"/>
</dbReference>
<dbReference type="InParanoid" id="P39848"/>
<dbReference type="OrthoDB" id="9816557at2"/>
<dbReference type="BioCyc" id="BSUB:BSU35780-MONOMER"/>
<dbReference type="Proteomes" id="UP000001570">
    <property type="component" value="Chromosome"/>
</dbReference>
<dbReference type="GO" id="GO:0005576">
    <property type="term" value="C:extracellular region"/>
    <property type="evidence" value="ECO:0007669"/>
    <property type="project" value="UniProtKB-SubCell"/>
</dbReference>
<dbReference type="GO" id="GO:0004040">
    <property type="term" value="F:amidase activity"/>
    <property type="evidence" value="ECO:0007669"/>
    <property type="project" value="InterPro"/>
</dbReference>
<dbReference type="GO" id="GO:0033925">
    <property type="term" value="F:mannosyl-glycoprotein endo-beta-N-acetylglucosaminidase activity"/>
    <property type="evidence" value="ECO:0007669"/>
    <property type="project" value="UniProtKB-EC"/>
</dbReference>
<dbReference type="GO" id="GO:0042834">
    <property type="term" value="F:peptidoglycan binding"/>
    <property type="evidence" value="ECO:0007669"/>
    <property type="project" value="InterPro"/>
</dbReference>
<dbReference type="GO" id="GO:0071555">
    <property type="term" value="P:cell wall organization"/>
    <property type="evidence" value="ECO:0007669"/>
    <property type="project" value="UniProtKB-KW"/>
</dbReference>
<dbReference type="Gene3D" id="1.10.530.10">
    <property type="match status" value="1"/>
</dbReference>
<dbReference type="Gene3D" id="2.30.30.40">
    <property type="entry name" value="SH3 Domains"/>
    <property type="match status" value="1"/>
</dbReference>
<dbReference type="InterPro" id="IPR002901">
    <property type="entry name" value="MGlyc_endo_b_GlcNAc-like_dom"/>
</dbReference>
<dbReference type="InterPro" id="IPR003646">
    <property type="entry name" value="SH3-like_bac-type"/>
</dbReference>
<dbReference type="InterPro" id="IPR007730">
    <property type="entry name" value="SPOR-like_dom"/>
</dbReference>
<dbReference type="Pfam" id="PF01832">
    <property type="entry name" value="Glucosaminidase"/>
    <property type="match status" value="1"/>
</dbReference>
<dbReference type="Pfam" id="PF08239">
    <property type="entry name" value="SH3_3"/>
    <property type="match status" value="1"/>
</dbReference>
<dbReference type="Pfam" id="PF05036">
    <property type="entry name" value="SPOR"/>
    <property type="match status" value="1"/>
</dbReference>
<dbReference type="SMART" id="SM00047">
    <property type="entry name" value="LYZ2"/>
    <property type="match status" value="1"/>
</dbReference>
<dbReference type="SMART" id="SM00287">
    <property type="entry name" value="SH3b"/>
    <property type="match status" value="1"/>
</dbReference>
<dbReference type="PROSITE" id="PS51781">
    <property type="entry name" value="SH3B"/>
    <property type="match status" value="1"/>
</dbReference>
<dbReference type="PROSITE" id="PS51724">
    <property type="entry name" value="SPOR"/>
    <property type="match status" value="3"/>
</dbReference>
<name>LYTD_BACSU</name>
<keyword id="KW-0134">Cell wall</keyword>
<keyword id="KW-0961">Cell wall biogenesis/degradation</keyword>
<keyword id="KW-0903">Direct protein sequencing</keyword>
<keyword id="KW-0378">Hydrolase</keyword>
<keyword id="KW-1185">Reference proteome</keyword>
<keyword id="KW-0677">Repeat</keyword>
<keyword id="KW-0964">Secreted</keyword>
<keyword id="KW-0732">Signal</keyword>
<evidence type="ECO:0000255" key="1">
    <source>
        <dbReference type="PROSITE-ProRule" id="PRU01117"/>
    </source>
</evidence>
<evidence type="ECO:0000269" key="2">
    <source>
    </source>
</evidence>
<evidence type="ECO:0000269" key="3">
    <source>
    </source>
</evidence>
<evidence type="ECO:0000269" key="4">
    <source>
    </source>
</evidence>
<evidence type="ECO:0000269" key="5">
    <source>
    </source>
</evidence>
<evidence type="ECO:0000305" key="6"/>
<comment type="function">
    <text evidence="3 4">Cell wall hydrolase not involved in cell autolysis, competence, sporulation or germination. It hydrolyzes the beta-1,4 glycan bond between the N-acetylglucosaminyl and the N-acetylmuramoyl residues in the glycan chain.</text>
</comment>
<comment type="catalytic activity">
    <reaction>
        <text>an N(4)-(oligosaccharide-(1-&gt;3)-[oligosaccharide-(1-&gt;6)]-beta-D-Man-(1-&gt;4)-beta-D-GlcNAc-(1-&gt;4)-alpha-D-GlcNAc)-L-asparaginyl-[protein] + H2O = an oligosaccharide-(1-&gt;3)-[oligosaccharide-(1-&gt;6)]-beta-D-Man-(1-&gt;4)-D-GlcNAc + N(4)-(N-acetyl-beta-D-glucosaminyl)-L-asparaginyl-[protein]</text>
        <dbReference type="Rhea" id="RHEA:73067"/>
        <dbReference type="Rhea" id="RHEA-COMP:12603"/>
        <dbReference type="Rhea" id="RHEA-COMP:18176"/>
        <dbReference type="ChEBI" id="CHEBI:15377"/>
        <dbReference type="ChEBI" id="CHEBI:132248"/>
        <dbReference type="ChEBI" id="CHEBI:192714"/>
        <dbReference type="ChEBI" id="CHEBI:192715"/>
        <dbReference type="EC" id="3.2.1.96"/>
    </reaction>
</comment>
<comment type="activity regulation">
    <text evidence="3">Inhibited by diethyl pyrocarbonate, slightly by EDTA. Not inhibited by PMSF, diisopropyl fluorophosphate, 2-mercaptoethanol or N-ethylmaleimide.</text>
</comment>
<comment type="subunit">
    <text>Homodimer.</text>
</comment>
<comment type="subcellular location">
    <subcellularLocation>
        <location evidence="2">Secreted</location>
    </subcellularLocation>
    <subcellularLocation>
        <location evidence="2">Secreted</location>
        <location evidence="2">Cell wall</location>
    </subcellularLocation>
</comment>
<comment type="induction">
    <text evidence="2 3">In stationary phase (PubMed:11987133); under control of SigD (PubMed:7581999).</text>
</comment>
<comment type="disruption phenotype">
    <text evidence="5">Cells lacking this gene show no motility changes on swarm plates; however in combination with an amidase deletion (lytC, AC Q02114) greatly reduced motility is seen.</text>
</comment>
<comment type="similarity">
    <text evidence="6">Belongs to the glycosyl hydrolase 73 family.</text>
</comment>
<gene>
    <name type="primary">lytD</name>
    <name type="synonym">cwlG</name>
    <name type="ordered locus">BSU35780</name>
</gene>
<accession>P39848</accession>
<feature type="signal peptide" evidence="5">
    <location>
        <begin position="1"/>
        <end position="27"/>
    </location>
</feature>
<feature type="chain" id="PRO_0000012118" description="Beta-N-acetylglucosaminidase">
    <location>
        <begin position="28"/>
        <end position="880"/>
    </location>
</feature>
<feature type="domain" description="SPOR 1">
    <location>
        <begin position="70"/>
        <end position="149"/>
    </location>
</feature>
<feature type="domain" description="SPOR 2">
    <location>
        <begin position="150"/>
        <end position="229"/>
    </location>
</feature>
<feature type="domain" description="SPOR 3">
    <location>
        <begin position="230"/>
        <end position="311"/>
    </location>
</feature>
<feature type="repeat" description="1">
    <location>
        <begin position="439"/>
        <end position="473"/>
    </location>
</feature>
<feature type="repeat" description="2">
    <location>
        <begin position="479"/>
        <end position="513"/>
    </location>
</feature>
<feature type="domain" description="SH3b" evidence="1">
    <location>
        <begin position="630"/>
        <end position="700"/>
    </location>
</feature>
<proteinExistence type="evidence at protein level"/>